<gene>
    <name evidence="1" type="primary">gfcR</name>
    <name type="ordered locus">MJ1646</name>
</gene>
<evidence type="ECO:0000255" key="1">
    <source>
        <dbReference type="HAMAP-Rule" id="MF_01214"/>
    </source>
</evidence>
<protein>
    <recommendedName>
        <fullName evidence="1">Transcriptional regulator GfcR</fullName>
    </recommendedName>
</protein>
<sequence length="211" mass="23306">MREIMNKELLKKVIELKSNGLTIGEIAEELNVSMETARYLVLNAEKLLKEEEKAIKLENVDIFIDWKNIGSSANRLKYISSIIVDILKSRNIEFDTVVGVSTSGVPIATLVASELGKELTIYIPKKHISEEGKKITGSISQNFSAVNYKRAVIIDDVVTSGSTLKECIKQLKEVCSPKLVVVLIDKSGLDEIEGVPLIPLIRIGAVNVEQK</sequence>
<proteinExistence type="inferred from homology"/>
<reference key="1">
    <citation type="journal article" date="1996" name="Science">
        <title>Complete genome sequence of the methanogenic archaeon, Methanococcus jannaschii.</title>
        <authorList>
            <person name="Bult C.J."/>
            <person name="White O."/>
            <person name="Olsen G.J."/>
            <person name="Zhou L."/>
            <person name="Fleischmann R.D."/>
            <person name="Sutton G.G."/>
            <person name="Blake J.A."/>
            <person name="FitzGerald L.M."/>
            <person name="Clayton R.A."/>
            <person name="Gocayne J.D."/>
            <person name="Kerlavage A.R."/>
            <person name="Dougherty B.A."/>
            <person name="Tomb J.-F."/>
            <person name="Adams M.D."/>
            <person name="Reich C.I."/>
            <person name="Overbeek R."/>
            <person name="Kirkness E.F."/>
            <person name="Weinstock K.G."/>
            <person name="Merrick J.M."/>
            <person name="Glodek A."/>
            <person name="Scott J.L."/>
            <person name="Geoghagen N.S.M."/>
            <person name="Weidman J.F."/>
            <person name="Fuhrmann J.L."/>
            <person name="Nguyen D."/>
            <person name="Utterback T.R."/>
            <person name="Kelley J.M."/>
            <person name="Peterson J.D."/>
            <person name="Sadow P.W."/>
            <person name="Hanna M.C."/>
            <person name="Cotton M.D."/>
            <person name="Roberts K.M."/>
            <person name="Hurst M.A."/>
            <person name="Kaine B.P."/>
            <person name="Borodovsky M."/>
            <person name="Klenk H.-P."/>
            <person name="Fraser C.M."/>
            <person name="Smith H.O."/>
            <person name="Woese C.R."/>
            <person name="Venter J.C."/>
        </authorList>
    </citation>
    <scope>NUCLEOTIDE SEQUENCE [LARGE SCALE GENOMIC DNA]</scope>
    <source>
        <strain>ATCC 43067 / DSM 2661 / JAL-1 / JCM 10045 / NBRC 100440</strain>
    </source>
</reference>
<name>GFCR_METJA</name>
<keyword id="KW-0238">DNA-binding</keyword>
<keyword id="KW-1185">Reference proteome</keyword>
<keyword id="KW-0804">Transcription</keyword>
<keyword id="KW-0805">Transcription regulation</keyword>
<accession>Q59040</accession>
<dbReference type="EMBL" id="L77117">
    <property type="protein sequence ID" value="AAB99667.1"/>
    <property type="molecule type" value="Genomic_DNA"/>
</dbReference>
<dbReference type="PIR" id="D64505">
    <property type="entry name" value="D64505"/>
</dbReference>
<dbReference type="SMR" id="Q59040"/>
<dbReference type="FunCoup" id="Q59040">
    <property type="interactions" value="111"/>
</dbReference>
<dbReference type="STRING" id="243232.MJ_1646"/>
<dbReference type="PaxDb" id="243232-MJ_1646"/>
<dbReference type="EnsemblBacteria" id="AAB99667">
    <property type="protein sequence ID" value="AAB99667"/>
    <property type="gene ID" value="MJ_1646"/>
</dbReference>
<dbReference type="KEGG" id="mja:MJ_1646"/>
<dbReference type="eggNOG" id="arCOG00028">
    <property type="taxonomic scope" value="Archaea"/>
</dbReference>
<dbReference type="HOGENOM" id="CLU_111001_0_0_2"/>
<dbReference type="InParanoid" id="Q59040"/>
<dbReference type="PhylomeDB" id="Q59040"/>
<dbReference type="Proteomes" id="UP000000805">
    <property type="component" value="Chromosome"/>
</dbReference>
<dbReference type="GO" id="GO:0003677">
    <property type="term" value="F:DNA binding"/>
    <property type="evidence" value="ECO:0007669"/>
    <property type="project" value="UniProtKB-UniRule"/>
</dbReference>
<dbReference type="GO" id="GO:0004588">
    <property type="term" value="F:orotate phosphoribosyltransferase activity"/>
    <property type="evidence" value="ECO:0000318"/>
    <property type="project" value="GO_Central"/>
</dbReference>
<dbReference type="GO" id="GO:0019856">
    <property type="term" value="P:pyrimidine nucleobase biosynthetic process"/>
    <property type="evidence" value="ECO:0000318"/>
    <property type="project" value="GO_Central"/>
</dbReference>
<dbReference type="GO" id="GO:0010468">
    <property type="term" value="P:regulation of gene expression"/>
    <property type="evidence" value="ECO:0007669"/>
    <property type="project" value="UniProtKB-UniRule"/>
</dbReference>
<dbReference type="GO" id="GO:0006222">
    <property type="term" value="P:UMP biosynthetic process"/>
    <property type="evidence" value="ECO:0000318"/>
    <property type="project" value="GO_Central"/>
</dbReference>
<dbReference type="CDD" id="cd06223">
    <property type="entry name" value="PRTases_typeI"/>
    <property type="match status" value="1"/>
</dbReference>
<dbReference type="Gene3D" id="3.40.50.2020">
    <property type="match status" value="1"/>
</dbReference>
<dbReference type="HAMAP" id="MF_01214">
    <property type="entry name" value="GfcR"/>
    <property type="match status" value="1"/>
</dbReference>
<dbReference type="InterPro" id="IPR022854">
    <property type="entry name" value="GfcR-like"/>
</dbReference>
<dbReference type="InterPro" id="IPR000836">
    <property type="entry name" value="PRibTrfase_dom"/>
</dbReference>
<dbReference type="InterPro" id="IPR029057">
    <property type="entry name" value="PRTase-like"/>
</dbReference>
<dbReference type="InterPro" id="IPR013324">
    <property type="entry name" value="RNA_pol_sigma_r3/r4-like"/>
</dbReference>
<dbReference type="NCBIfam" id="NF002620">
    <property type="entry name" value="PRK02277.1"/>
    <property type="match status" value="1"/>
</dbReference>
<dbReference type="PANTHER" id="PTHR19278">
    <property type="entry name" value="OROTATE PHOSPHORIBOSYLTRANSFERASE"/>
    <property type="match status" value="1"/>
</dbReference>
<dbReference type="PANTHER" id="PTHR19278:SF41">
    <property type="entry name" value="PYRE-LIKE PROTEIN"/>
    <property type="match status" value="1"/>
</dbReference>
<dbReference type="Pfam" id="PF00156">
    <property type="entry name" value="Pribosyltran"/>
    <property type="match status" value="1"/>
</dbReference>
<dbReference type="SUPFAM" id="SSF53271">
    <property type="entry name" value="PRTase-like"/>
    <property type="match status" value="1"/>
</dbReference>
<dbReference type="SUPFAM" id="SSF88659">
    <property type="entry name" value="Sigma3 and sigma4 domains of RNA polymerase sigma factors"/>
    <property type="match status" value="1"/>
</dbReference>
<dbReference type="PROSITE" id="PS00103">
    <property type="entry name" value="PUR_PYR_PR_TRANSFER"/>
    <property type="match status" value="1"/>
</dbReference>
<feature type="chain" id="PRO_0000110810" description="Transcriptional regulator GfcR">
    <location>
        <begin position="1"/>
        <end position="211"/>
    </location>
</feature>
<comment type="domain">
    <text evidence="1">Contains an N-terminal DNA-binding winged helix-turn-helix domain and a C-terminal regulatory domain (or effector binding domain) resembling phosphoribosyltransferase (PRT) domain.</text>
</comment>
<comment type="similarity">
    <text evidence="1">Belongs to the purine/pyrimidine phosphoribosyltransferase family. GfcR subfamily.</text>
</comment>
<organism>
    <name type="scientific">Methanocaldococcus jannaschii (strain ATCC 43067 / DSM 2661 / JAL-1 / JCM 10045 / NBRC 100440)</name>
    <name type="common">Methanococcus jannaschii</name>
    <dbReference type="NCBI Taxonomy" id="243232"/>
    <lineage>
        <taxon>Archaea</taxon>
        <taxon>Methanobacteriati</taxon>
        <taxon>Methanobacteriota</taxon>
        <taxon>Methanomada group</taxon>
        <taxon>Methanococci</taxon>
        <taxon>Methanococcales</taxon>
        <taxon>Methanocaldococcaceae</taxon>
        <taxon>Methanocaldococcus</taxon>
    </lineage>
</organism>